<sequence length="350" mass="40372">MLEGAELYFNVDHGYLEGLVRGCKASLLTQQDYINLVQCETLEDLKIHLQTTDYGNFLANQTNPLTVSKIDTEMRKRLCGEFEYFRNHSLEPLSTFLTYMTCSYMIDNVIPLMNGALQKKSVKEILGKCHPLGRFTEMEAVNIAETPSDLFNAILIETPLAPFFQDCMSENALNELNIELLRNKLYKSYLEAFYKFCKNHGDVTAEVMCPILEFEADRRAFIITLNSFGTELSKEDRETLYPTFGKLYPEGLRLLAQAEDFDQMKNVADHYGVYKPLFEAVGGSGGKTLEDVFYEREVQMNVLAFNRQFHYGVFYAYVKLKEQEIRNIAWIAECISQRHRTKINSYIPIL</sequence>
<accession>Q5R7B7</accession>
<feature type="chain" id="PRO_0000285659" description="V-type proton ATPase subunit d 2">
    <location>
        <begin position="1"/>
        <end position="350"/>
    </location>
</feature>
<comment type="function">
    <text evidence="1 2">Subunit of the V0 complex of vacuolar(H+)-ATPase (V-ATPase), a multisubunit enzyme composed of a peripheral complex (V1) that hydrolyzes ATP and a membrane integral complex (V0) that translocates protons. V-ATPase is responsible for acidifying and maintaining the pH of intracellular compartments and in some cell types, is targeted to the plasma membrane, where it is responsible for acidifying the extracellular environment (By similarity). May play a role in coupling of proton transport and ATP hydrolysis (By similarity). Regulator of osteoclast fusion and bone formation (By similarity).</text>
</comment>
<comment type="subunit">
    <text evidence="1 2">V-ATPase is a heteromultimeric enzyme made up of two complexes: the ATP-hydrolytic V1 complex and the proton translocation V0 complex. The V1 complex consists of three catalytic AB heterodimers that form a heterohexamer, three peripheral stalks each consisting of EG heterodimers, one central rotor including subunits D and F, and the regulatory subunits C and H. The proton translocation complex V0 consists of the proton transport subunit a, a ring of proteolipid subunits c9c'', rotary subunit d, subunits e and f, and the accessory subunits ATP6AP1/Ac45 and ATP6AP2/PRR. Interacts with TM4SF19; this interaction inhibits V1-V0 complex assembly (By similarity).</text>
</comment>
<comment type="similarity">
    <text evidence="3">Belongs to the V-ATPase V0D/AC39 subunit family.</text>
</comment>
<keyword id="KW-0375">Hydrogen ion transport</keyword>
<keyword id="KW-0406">Ion transport</keyword>
<keyword id="KW-1185">Reference proteome</keyword>
<keyword id="KW-0813">Transport</keyword>
<protein>
    <recommendedName>
        <fullName>V-type proton ATPase subunit d 2</fullName>
        <shortName>V-ATPase subunit d 2</shortName>
    </recommendedName>
    <alternativeName>
        <fullName>Vacuolar proton pump subunit d 2</fullName>
    </alternativeName>
</protein>
<proteinExistence type="evidence at transcript level"/>
<name>VA0D2_PONAB</name>
<gene>
    <name type="primary">ATP6V0D2</name>
</gene>
<organism>
    <name type="scientific">Pongo abelii</name>
    <name type="common">Sumatran orangutan</name>
    <name type="synonym">Pongo pygmaeus abelii</name>
    <dbReference type="NCBI Taxonomy" id="9601"/>
    <lineage>
        <taxon>Eukaryota</taxon>
        <taxon>Metazoa</taxon>
        <taxon>Chordata</taxon>
        <taxon>Craniata</taxon>
        <taxon>Vertebrata</taxon>
        <taxon>Euteleostomi</taxon>
        <taxon>Mammalia</taxon>
        <taxon>Eutheria</taxon>
        <taxon>Euarchontoglires</taxon>
        <taxon>Primates</taxon>
        <taxon>Haplorrhini</taxon>
        <taxon>Catarrhini</taxon>
        <taxon>Hominidae</taxon>
        <taxon>Pongo</taxon>
    </lineage>
</organism>
<dbReference type="EMBL" id="CR860201">
    <property type="protein sequence ID" value="CAH92343.1"/>
    <property type="status" value="ALT_TERM"/>
    <property type="molecule type" value="mRNA"/>
</dbReference>
<dbReference type="RefSeq" id="NP_001126378.1">
    <property type="nucleotide sequence ID" value="NM_001132906.2"/>
</dbReference>
<dbReference type="SMR" id="Q5R7B7"/>
<dbReference type="STRING" id="9601.ENSPPYP00000020999"/>
<dbReference type="GeneID" id="100173359"/>
<dbReference type="KEGG" id="pon:100173359"/>
<dbReference type="CTD" id="245972"/>
<dbReference type="eggNOG" id="KOG2957">
    <property type="taxonomic scope" value="Eukaryota"/>
</dbReference>
<dbReference type="InParanoid" id="Q5R7B7"/>
<dbReference type="OrthoDB" id="10250083at2759"/>
<dbReference type="Proteomes" id="UP000001595">
    <property type="component" value="Unplaced"/>
</dbReference>
<dbReference type="GO" id="GO:0016324">
    <property type="term" value="C:apical plasma membrane"/>
    <property type="evidence" value="ECO:0000250"/>
    <property type="project" value="UniProtKB"/>
</dbReference>
<dbReference type="GO" id="GO:0033179">
    <property type="term" value="C:proton-transporting V-type ATPase, V0 domain"/>
    <property type="evidence" value="ECO:0007669"/>
    <property type="project" value="InterPro"/>
</dbReference>
<dbReference type="GO" id="GO:0046961">
    <property type="term" value="F:proton-transporting ATPase activity, rotational mechanism"/>
    <property type="evidence" value="ECO:0007669"/>
    <property type="project" value="InterPro"/>
</dbReference>
<dbReference type="FunFam" id="1.20.1690.10:FF:000001">
    <property type="entry name" value="V-type proton ATPase subunit"/>
    <property type="match status" value="1"/>
</dbReference>
<dbReference type="FunFam" id="1.20.1690.10:FF:000003">
    <property type="entry name" value="V-type proton ATPase subunit"/>
    <property type="match status" value="1"/>
</dbReference>
<dbReference type="Gene3D" id="1.10.132.50">
    <property type="entry name" value="ATP synthase (C/AC39) subunit, domain 3"/>
    <property type="match status" value="1"/>
</dbReference>
<dbReference type="Gene3D" id="1.20.1690.10">
    <property type="entry name" value="V-type ATP synthase subunit C domain"/>
    <property type="match status" value="2"/>
</dbReference>
<dbReference type="InterPro" id="IPR036079">
    <property type="entry name" value="ATPase_csu/dsu_sf"/>
</dbReference>
<dbReference type="InterPro" id="IPR002843">
    <property type="entry name" value="ATPase_V0-cplx_csu/dsu"/>
</dbReference>
<dbReference type="InterPro" id="IPR016727">
    <property type="entry name" value="ATPase_V0-cplx_dsu"/>
</dbReference>
<dbReference type="InterPro" id="IPR035067">
    <property type="entry name" value="V-type_ATPase_csu/dsu"/>
</dbReference>
<dbReference type="InterPro" id="IPR044911">
    <property type="entry name" value="V-type_ATPase_csu/dsu_dom_3"/>
</dbReference>
<dbReference type="PANTHER" id="PTHR11028">
    <property type="entry name" value="VACUOLAR ATP SYNTHASE SUBUNIT AC39"/>
    <property type="match status" value="1"/>
</dbReference>
<dbReference type="Pfam" id="PF01992">
    <property type="entry name" value="vATP-synt_AC39"/>
    <property type="match status" value="1"/>
</dbReference>
<dbReference type="PIRSF" id="PIRSF018497">
    <property type="entry name" value="V-ATP_synth_D"/>
    <property type="match status" value="1"/>
</dbReference>
<dbReference type="SUPFAM" id="SSF103486">
    <property type="entry name" value="V-type ATP synthase subunit C"/>
    <property type="match status" value="1"/>
</dbReference>
<reference key="1">
    <citation type="submission" date="2004-11" db="EMBL/GenBank/DDBJ databases">
        <authorList>
            <consortium name="The German cDNA consortium"/>
        </authorList>
    </citation>
    <scope>NUCLEOTIDE SEQUENCE [LARGE SCALE MRNA]</scope>
    <source>
        <tissue>Kidney</tissue>
    </source>
</reference>
<evidence type="ECO:0000250" key="1">
    <source>
        <dbReference type="UniProtKB" id="P61421"/>
    </source>
</evidence>
<evidence type="ECO:0000250" key="2">
    <source>
        <dbReference type="UniProtKB" id="Q80SY3"/>
    </source>
</evidence>
<evidence type="ECO:0000305" key="3"/>